<dbReference type="EC" id="1.3.98.5" evidence="1"/>
<dbReference type="EMBL" id="CP001407">
    <property type="protein sequence ID" value="ACO28152.1"/>
    <property type="molecule type" value="Genomic_DNA"/>
</dbReference>
<dbReference type="SMR" id="C1EQ58"/>
<dbReference type="KEGG" id="bcx:BCA_5540"/>
<dbReference type="PATRIC" id="fig|572264.18.peg.5462"/>
<dbReference type="UniPathway" id="UPA00252"/>
<dbReference type="Proteomes" id="UP000002210">
    <property type="component" value="Chromosome"/>
</dbReference>
<dbReference type="GO" id="GO:0020037">
    <property type="term" value="F:heme binding"/>
    <property type="evidence" value="ECO:0007669"/>
    <property type="project" value="InterPro"/>
</dbReference>
<dbReference type="GO" id="GO:0046872">
    <property type="term" value="F:metal ion binding"/>
    <property type="evidence" value="ECO:0007669"/>
    <property type="project" value="UniProtKB-KW"/>
</dbReference>
<dbReference type="GO" id="GO:0016634">
    <property type="term" value="F:oxidoreductase activity, acting on the CH-CH group of donors, oxygen as acceptor"/>
    <property type="evidence" value="ECO:0007669"/>
    <property type="project" value="UniProtKB-UniRule"/>
</dbReference>
<dbReference type="GO" id="GO:0004601">
    <property type="term" value="F:peroxidase activity"/>
    <property type="evidence" value="ECO:0007669"/>
    <property type="project" value="InterPro"/>
</dbReference>
<dbReference type="GO" id="GO:0006785">
    <property type="term" value="P:heme B biosynthetic process"/>
    <property type="evidence" value="ECO:0007669"/>
    <property type="project" value="UniProtKB-UniRule"/>
</dbReference>
<dbReference type="Gene3D" id="3.30.70.1030">
    <property type="entry name" value="Apc35880, domain 1"/>
    <property type="match status" value="2"/>
</dbReference>
<dbReference type="HAMAP" id="MF_01442">
    <property type="entry name" value="Coproheme_decarbox_1"/>
    <property type="match status" value="1"/>
</dbReference>
<dbReference type="InterPro" id="IPR031332">
    <property type="entry name" value="CHDC"/>
</dbReference>
<dbReference type="InterPro" id="IPR010644">
    <property type="entry name" value="ChdC/CLD"/>
</dbReference>
<dbReference type="InterPro" id="IPR011008">
    <property type="entry name" value="Dimeric_a/b-barrel"/>
</dbReference>
<dbReference type="NCBIfam" id="NF008913">
    <property type="entry name" value="PRK12276.1"/>
    <property type="match status" value="1"/>
</dbReference>
<dbReference type="PANTHER" id="PTHR36843:SF1">
    <property type="entry name" value="COPROHEME DECARBOXYLASE"/>
    <property type="match status" value="1"/>
</dbReference>
<dbReference type="PANTHER" id="PTHR36843">
    <property type="entry name" value="HEME-DEPENDENT PEROXIDASE YWFI-RELATED"/>
    <property type="match status" value="1"/>
</dbReference>
<dbReference type="Pfam" id="PF06778">
    <property type="entry name" value="Chlor_dismutase"/>
    <property type="match status" value="1"/>
</dbReference>
<dbReference type="SUPFAM" id="SSF54909">
    <property type="entry name" value="Dimeric alpha+beta barrel"/>
    <property type="match status" value="1"/>
</dbReference>
<comment type="function">
    <text evidence="1">Involved in coproporphyrin-dependent heme b biosynthesis. Catalyzes the decarboxylation of Fe-coproporphyrin III (coproheme) to heme b (protoheme IX), the last step of the pathway. The reaction occurs in a stepwise manner with a three-propionate intermediate.</text>
</comment>
<comment type="catalytic activity">
    <reaction evidence="1">
        <text>Fe-coproporphyrin III + 2 H2O2 + 2 H(+) = heme b + 2 CO2 + 4 H2O</text>
        <dbReference type="Rhea" id="RHEA:56516"/>
        <dbReference type="ChEBI" id="CHEBI:15377"/>
        <dbReference type="ChEBI" id="CHEBI:15378"/>
        <dbReference type="ChEBI" id="CHEBI:16240"/>
        <dbReference type="ChEBI" id="CHEBI:16526"/>
        <dbReference type="ChEBI" id="CHEBI:60344"/>
        <dbReference type="ChEBI" id="CHEBI:68438"/>
        <dbReference type="EC" id="1.3.98.5"/>
    </reaction>
    <physiologicalReaction direction="left-to-right" evidence="1">
        <dbReference type="Rhea" id="RHEA:56517"/>
    </physiologicalReaction>
</comment>
<comment type="catalytic activity">
    <reaction evidence="1">
        <text>Fe-coproporphyrin III + H2O2 + H(+) = harderoheme III + CO2 + 2 H2O</text>
        <dbReference type="Rhea" id="RHEA:57940"/>
        <dbReference type="ChEBI" id="CHEBI:15377"/>
        <dbReference type="ChEBI" id="CHEBI:15378"/>
        <dbReference type="ChEBI" id="CHEBI:16240"/>
        <dbReference type="ChEBI" id="CHEBI:16526"/>
        <dbReference type="ChEBI" id="CHEBI:68438"/>
        <dbReference type="ChEBI" id="CHEBI:142463"/>
    </reaction>
    <physiologicalReaction direction="left-to-right" evidence="1">
        <dbReference type="Rhea" id="RHEA:57941"/>
    </physiologicalReaction>
</comment>
<comment type="catalytic activity">
    <reaction evidence="1">
        <text>harderoheme III + H2O2 + H(+) = heme b + CO2 + 2 H2O</text>
        <dbReference type="Rhea" id="RHEA:57944"/>
        <dbReference type="ChEBI" id="CHEBI:15377"/>
        <dbReference type="ChEBI" id="CHEBI:15378"/>
        <dbReference type="ChEBI" id="CHEBI:16240"/>
        <dbReference type="ChEBI" id="CHEBI:16526"/>
        <dbReference type="ChEBI" id="CHEBI:60344"/>
        <dbReference type="ChEBI" id="CHEBI:142463"/>
    </reaction>
    <physiologicalReaction direction="left-to-right" evidence="1">
        <dbReference type="Rhea" id="RHEA:57945"/>
    </physiologicalReaction>
</comment>
<comment type="cofactor">
    <cofactor evidence="1">
        <name>Fe-coproporphyrin III</name>
        <dbReference type="ChEBI" id="CHEBI:68438"/>
    </cofactor>
    <text evidence="1">Fe-coproporphyrin III acts both as a substrate and a redox cofactor.</text>
</comment>
<comment type="pathway">
    <text evidence="1">Porphyrin-containing compound metabolism; protoheme biosynthesis.</text>
</comment>
<comment type="similarity">
    <text evidence="1">Belongs to the ChdC family. Type 1 subfamily.</text>
</comment>
<keyword id="KW-0349">Heme</keyword>
<keyword id="KW-0350">Heme biosynthesis</keyword>
<keyword id="KW-0408">Iron</keyword>
<keyword id="KW-0479">Metal-binding</keyword>
<keyword id="KW-0560">Oxidoreductase</keyword>
<name>CHDC_BACC3</name>
<sequence length="247" mass="28652">MSEATTTLDGWYCLHDLRSIDWAAWKTLSSDERGQAVSEFLNVVEKWNDVAAAKKGSHAMYTVVGQKADIMLMILRPTMEELNEIETELNKTTLAEYMVPAYSYVSVVELSNYLPADEDPYQNPQILARLYPELPKANHICFYPMDKRRQGDDNWYMLPMEERKKMMYSHSKIGRQYAGKVRQVISGSVGFDDFEWGVTLFADDVLQFKKLIYEMRFDEVSARYGEFGTFFVGNILPDEKVEKFLHI</sequence>
<proteinExistence type="inferred from homology"/>
<evidence type="ECO:0000255" key="1">
    <source>
        <dbReference type="HAMAP-Rule" id="MF_01442"/>
    </source>
</evidence>
<accession>C1EQ58</accession>
<reference key="1">
    <citation type="submission" date="2009-02" db="EMBL/GenBank/DDBJ databases">
        <title>Genome sequence of Bacillus cereus 03BB102.</title>
        <authorList>
            <person name="Dodson R.J."/>
            <person name="Jackson P."/>
            <person name="Munk A.C."/>
            <person name="Brettin T."/>
            <person name="Bruce D."/>
            <person name="Detter C."/>
            <person name="Tapia R."/>
            <person name="Han C."/>
            <person name="Sutton G."/>
            <person name="Sims D."/>
        </authorList>
    </citation>
    <scope>NUCLEOTIDE SEQUENCE [LARGE SCALE GENOMIC DNA]</scope>
    <source>
        <strain>03BB102</strain>
    </source>
</reference>
<gene>
    <name evidence="1" type="primary">chdC</name>
    <name type="ordered locus">BCA_5540</name>
</gene>
<feature type="chain" id="PRO_1000184937" description="Coproheme decarboxylase">
    <location>
        <begin position="1"/>
        <end position="247"/>
    </location>
</feature>
<feature type="active site" evidence="1">
    <location>
        <position position="143"/>
    </location>
</feature>
<feature type="binding site" evidence="1">
    <location>
        <position position="129"/>
    </location>
    <ligand>
        <name>Fe-coproporphyrin III</name>
        <dbReference type="ChEBI" id="CHEBI:68438"/>
    </ligand>
</feature>
<feature type="binding site" evidence="1">
    <location>
        <begin position="143"/>
        <end position="147"/>
    </location>
    <ligand>
        <name>Fe-coproporphyrin III</name>
        <dbReference type="ChEBI" id="CHEBI:68438"/>
    </ligand>
</feature>
<feature type="binding site" description="axial binding residue" evidence="1">
    <location>
        <position position="170"/>
    </location>
    <ligand>
        <name>Fe-coproporphyrin III</name>
        <dbReference type="ChEBI" id="CHEBI:68438"/>
    </ligand>
    <ligandPart>
        <name>Fe</name>
        <dbReference type="ChEBI" id="CHEBI:18248"/>
    </ligandPart>
</feature>
<feature type="binding site" evidence="1">
    <location>
        <position position="183"/>
    </location>
    <ligand>
        <name>Fe-coproporphyrin III</name>
        <dbReference type="ChEBI" id="CHEBI:68438"/>
    </ligand>
</feature>
<feature type="binding site" evidence="1">
    <location>
        <position position="221"/>
    </location>
    <ligand>
        <name>Fe-coproporphyrin III</name>
        <dbReference type="ChEBI" id="CHEBI:68438"/>
    </ligand>
</feature>
<protein>
    <recommendedName>
        <fullName evidence="1">Coproheme decarboxylase</fullName>
        <ecNumber evidence="1">1.3.98.5</ecNumber>
    </recommendedName>
    <alternativeName>
        <fullName evidence="1">Coproheme III oxidative decarboxylase</fullName>
    </alternativeName>
    <alternativeName>
        <fullName evidence="1">Hydrogen peroxide-dependent heme synthase</fullName>
    </alternativeName>
</protein>
<organism>
    <name type="scientific">Bacillus cereus (strain 03BB102)</name>
    <dbReference type="NCBI Taxonomy" id="572264"/>
    <lineage>
        <taxon>Bacteria</taxon>
        <taxon>Bacillati</taxon>
        <taxon>Bacillota</taxon>
        <taxon>Bacilli</taxon>
        <taxon>Bacillales</taxon>
        <taxon>Bacillaceae</taxon>
        <taxon>Bacillus</taxon>
        <taxon>Bacillus cereus group</taxon>
    </lineage>
</organism>